<feature type="chain" id="PRO_0000119661" description="Glutamate--tRNA ligase">
    <location>
        <begin position="1"/>
        <end position="484"/>
    </location>
</feature>
<feature type="short sequence motif" description="'HIGH' region" evidence="1">
    <location>
        <begin position="11"/>
        <end position="21"/>
    </location>
</feature>
<feature type="short sequence motif" description="'KMSKS' region" evidence="1">
    <location>
        <begin position="255"/>
        <end position="259"/>
    </location>
</feature>
<feature type="binding site" evidence="1">
    <location>
        <position position="258"/>
    </location>
    <ligand>
        <name>ATP</name>
        <dbReference type="ChEBI" id="CHEBI:30616"/>
    </ligand>
</feature>
<dbReference type="EC" id="6.1.1.17" evidence="1"/>
<dbReference type="EMBL" id="AE009948">
    <property type="protein sequence ID" value="AAM99021.1"/>
    <property type="molecule type" value="Genomic_DNA"/>
</dbReference>
<dbReference type="RefSeq" id="NP_687149.1">
    <property type="nucleotide sequence ID" value="NC_004116.1"/>
</dbReference>
<dbReference type="RefSeq" id="WP_001284500.1">
    <property type="nucleotide sequence ID" value="NC_004116.1"/>
</dbReference>
<dbReference type="SMR" id="Q8E284"/>
<dbReference type="STRING" id="208435.SAG0113"/>
<dbReference type="KEGG" id="sag:SAG0113"/>
<dbReference type="PATRIC" id="fig|208435.3.peg.112"/>
<dbReference type="HOGENOM" id="CLU_015768_6_1_9"/>
<dbReference type="OrthoDB" id="9807503at2"/>
<dbReference type="Proteomes" id="UP000000821">
    <property type="component" value="Chromosome"/>
</dbReference>
<dbReference type="GO" id="GO:0005829">
    <property type="term" value="C:cytosol"/>
    <property type="evidence" value="ECO:0007669"/>
    <property type="project" value="TreeGrafter"/>
</dbReference>
<dbReference type="GO" id="GO:0005524">
    <property type="term" value="F:ATP binding"/>
    <property type="evidence" value="ECO:0007669"/>
    <property type="project" value="UniProtKB-UniRule"/>
</dbReference>
<dbReference type="GO" id="GO:0004818">
    <property type="term" value="F:glutamate-tRNA ligase activity"/>
    <property type="evidence" value="ECO:0007669"/>
    <property type="project" value="UniProtKB-UniRule"/>
</dbReference>
<dbReference type="GO" id="GO:0000049">
    <property type="term" value="F:tRNA binding"/>
    <property type="evidence" value="ECO:0007669"/>
    <property type="project" value="InterPro"/>
</dbReference>
<dbReference type="GO" id="GO:0008270">
    <property type="term" value="F:zinc ion binding"/>
    <property type="evidence" value="ECO:0007669"/>
    <property type="project" value="InterPro"/>
</dbReference>
<dbReference type="GO" id="GO:0006424">
    <property type="term" value="P:glutamyl-tRNA aminoacylation"/>
    <property type="evidence" value="ECO:0007669"/>
    <property type="project" value="UniProtKB-UniRule"/>
</dbReference>
<dbReference type="CDD" id="cd00808">
    <property type="entry name" value="GluRS_core"/>
    <property type="match status" value="1"/>
</dbReference>
<dbReference type="FunFam" id="1.10.10.350:FF:000002">
    <property type="entry name" value="Glutamate--tRNA ligase"/>
    <property type="match status" value="1"/>
</dbReference>
<dbReference type="FunFam" id="3.40.50.620:FF:000007">
    <property type="entry name" value="Glutamate--tRNA ligase"/>
    <property type="match status" value="1"/>
</dbReference>
<dbReference type="Gene3D" id="1.10.10.350">
    <property type="match status" value="1"/>
</dbReference>
<dbReference type="Gene3D" id="3.40.50.620">
    <property type="entry name" value="HUPs"/>
    <property type="match status" value="1"/>
</dbReference>
<dbReference type="HAMAP" id="MF_00022">
    <property type="entry name" value="Glu_tRNA_synth_type1"/>
    <property type="match status" value="1"/>
</dbReference>
<dbReference type="InterPro" id="IPR045462">
    <property type="entry name" value="aa-tRNA-synth_I_cd-bd"/>
</dbReference>
<dbReference type="InterPro" id="IPR020751">
    <property type="entry name" value="aa-tRNA-synth_I_codon-bd_sub2"/>
</dbReference>
<dbReference type="InterPro" id="IPR001412">
    <property type="entry name" value="aa-tRNA-synth_I_CS"/>
</dbReference>
<dbReference type="InterPro" id="IPR008925">
    <property type="entry name" value="aa_tRNA-synth_I_cd-bd_sf"/>
</dbReference>
<dbReference type="InterPro" id="IPR004527">
    <property type="entry name" value="Glu-tRNA-ligase_bac/mito"/>
</dbReference>
<dbReference type="InterPro" id="IPR000924">
    <property type="entry name" value="Glu/Gln-tRNA-synth"/>
</dbReference>
<dbReference type="InterPro" id="IPR020058">
    <property type="entry name" value="Glu/Gln-tRNA-synth_Ib_cat-dom"/>
</dbReference>
<dbReference type="InterPro" id="IPR049940">
    <property type="entry name" value="GluQ/Sye"/>
</dbReference>
<dbReference type="InterPro" id="IPR033910">
    <property type="entry name" value="GluRS_core"/>
</dbReference>
<dbReference type="InterPro" id="IPR014729">
    <property type="entry name" value="Rossmann-like_a/b/a_fold"/>
</dbReference>
<dbReference type="NCBIfam" id="TIGR00464">
    <property type="entry name" value="gltX_bact"/>
    <property type="match status" value="1"/>
</dbReference>
<dbReference type="PANTHER" id="PTHR43311">
    <property type="entry name" value="GLUTAMATE--TRNA LIGASE"/>
    <property type="match status" value="1"/>
</dbReference>
<dbReference type="PANTHER" id="PTHR43311:SF2">
    <property type="entry name" value="GLUTAMATE--TRNA LIGASE, MITOCHONDRIAL-RELATED"/>
    <property type="match status" value="1"/>
</dbReference>
<dbReference type="Pfam" id="PF19269">
    <property type="entry name" value="Anticodon_2"/>
    <property type="match status" value="1"/>
</dbReference>
<dbReference type="Pfam" id="PF00749">
    <property type="entry name" value="tRNA-synt_1c"/>
    <property type="match status" value="1"/>
</dbReference>
<dbReference type="PRINTS" id="PR00987">
    <property type="entry name" value="TRNASYNTHGLU"/>
</dbReference>
<dbReference type="SUPFAM" id="SSF48163">
    <property type="entry name" value="An anticodon-binding domain of class I aminoacyl-tRNA synthetases"/>
    <property type="match status" value="1"/>
</dbReference>
<dbReference type="SUPFAM" id="SSF52374">
    <property type="entry name" value="Nucleotidylyl transferase"/>
    <property type="match status" value="1"/>
</dbReference>
<dbReference type="PROSITE" id="PS00178">
    <property type="entry name" value="AA_TRNA_LIGASE_I"/>
    <property type="match status" value="1"/>
</dbReference>
<organism>
    <name type="scientific">Streptococcus agalactiae serotype V (strain ATCC BAA-611 / 2603 V/R)</name>
    <dbReference type="NCBI Taxonomy" id="208435"/>
    <lineage>
        <taxon>Bacteria</taxon>
        <taxon>Bacillati</taxon>
        <taxon>Bacillota</taxon>
        <taxon>Bacilli</taxon>
        <taxon>Lactobacillales</taxon>
        <taxon>Streptococcaceae</taxon>
        <taxon>Streptococcus</taxon>
    </lineage>
</organism>
<sequence length="484" mass="55555">MANKIRVRYAPSPTGLLHIGNARTALFNYLYARHHGGDFVIRIEDTDRKRHVEDGERSQLENLRWLGMDWDESPETHENYRQSERLELYQRYIDQLLAEGKAYKSYVTEEELAAERERQELAGETPRYINEFIGMSETEKEAYIAEREAAGIIPTVRLAVNESGIYKWTDMVKGDIEFEGSNIGGDWVIQKKDGYPTYNFAVVIDDHDMQISHVIRGDDHIANTPKQLMVYEALGWEAPQFGHMTLIINSETGKKLSKRDTNTLQFIEDYRKKGYMSEAVFNFIALLGWNPGGEEEIFSREQLINLFDENRLSKSPAAFDQKKMDWMSNDYLKNADFESVFALCKPFLEEAGRLTDKAEKLVELYQPQLKSADEIVPLTDLFFADFPELTEAEKEVMAAETVPTVLSAFKEKLVSLSDEEFTRDTIFPQIKAVQKETGIKGKNLFMPIRIAVSGEMHGPELPDTIYLLGKEKSVQHIDNMLAKL</sequence>
<comment type="function">
    <text evidence="1">Catalyzes the attachment of glutamate to tRNA(Glu) in a two-step reaction: glutamate is first activated by ATP to form Glu-AMP and then transferred to the acceptor end of tRNA(Glu).</text>
</comment>
<comment type="catalytic activity">
    <reaction evidence="1">
        <text>tRNA(Glu) + L-glutamate + ATP = L-glutamyl-tRNA(Glu) + AMP + diphosphate</text>
        <dbReference type="Rhea" id="RHEA:23540"/>
        <dbReference type="Rhea" id="RHEA-COMP:9663"/>
        <dbReference type="Rhea" id="RHEA-COMP:9680"/>
        <dbReference type="ChEBI" id="CHEBI:29985"/>
        <dbReference type="ChEBI" id="CHEBI:30616"/>
        <dbReference type="ChEBI" id="CHEBI:33019"/>
        <dbReference type="ChEBI" id="CHEBI:78442"/>
        <dbReference type="ChEBI" id="CHEBI:78520"/>
        <dbReference type="ChEBI" id="CHEBI:456215"/>
        <dbReference type="EC" id="6.1.1.17"/>
    </reaction>
</comment>
<comment type="subunit">
    <text evidence="1">Monomer.</text>
</comment>
<comment type="subcellular location">
    <subcellularLocation>
        <location evidence="1">Cytoplasm</location>
    </subcellularLocation>
</comment>
<comment type="similarity">
    <text evidence="1">Belongs to the class-I aminoacyl-tRNA synthetase family. Glutamate--tRNA ligase type 1 subfamily.</text>
</comment>
<accession>Q8E284</accession>
<evidence type="ECO:0000255" key="1">
    <source>
        <dbReference type="HAMAP-Rule" id="MF_00022"/>
    </source>
</evidence>
<protein>
    <recommendedName>
        <fullName evidence="1">Glutamate--tRNA ligase</fullName>
        <ecNumber evidence="1">6.1.1.17</ecNumber>
    </recommendedName>
    <alternativeName>
        <fullName evidence="1">Glutamyl-tRNA synthetase</fullName>
        <shortName evidence="1">GluRS</shortName>
    </alternativeName>
</protein>
<name>SYE_STRA5</name>
<reference key="1">
    <citation type="journal article" date="2002" name="Proc. Natl. Acad. Sci. U.S.A.">
        <title>Complete genome sequence and comparative genomic analysis of an emerging human pathogen, serotype V Streptococcus agalactiae.</title>
        <authorList>
            <person name="Tettelin H."/>
            <person name="Masignani V."/>
            <person name="Cieslewicz M.J."/>
            <person name="Eisen J.A."/>
            <person name="Peterson S.N."/>
            <person name="Wessels M.R."/>
            <person name="Paulsen I.T."/>
            <person name="Nelson K.E."/>
            <person name="Margarit I."/>
            <person name="Read T.D."/>
            <person name="Madoff L.C."/>
            <person name="Wolf A.M."/>
            <person name="Beanan M.J."/>
            <person name="Brinkac L.M."/>
            <person name="Daugherty S.C."/>
            <person name="DeBoy R.T."/>
            <person name="Durkin A.S."/>
            <person name="Kolonay J.F."/>
            <person name="Madupu R."/>
            <person name="Lewis M.R."/>
            <person name="Radune D."/>
            <person name="Fedorova N.B."/>
            <person name="Scanlan D."/>
            <person name="Khouri H.M."/>
            <person name="Mulligan S."/>
            <person name="Carty H.A."/>
            <person name="Cline R.T."/>
            <person name="Van Aken S.E."/>
            <person name="Gill J."/>
            <person name="Scarselli M."/>
            <person name="Mora M."/>
            <person name="Iacobini E.T."/>
            <person name="Brettoni C."/>
            <person name="Galli G."/>
            <person name="Mariani M."/>
            <person name="Vegni F."/>
            <person name="Maione D."/>
            <person name="Rinaudo D."/>
            <person name="Rappuoli R."/>
            <person name="Telford J.L."/>
            <person name="Kasper D.L."/>
            <person name="Grandi G."/>
            <person name="Fraser C.M."/>
        </authorList>
    </citation>
    <scope>NUCLEOTIDE SEQUENCE [LARGE SCALE GENOMIC DNA]</scope>
    <source>
        <strain>ATCC BAA-611 / 2603 V/R</strain>
    </source>
</reference>
<gene>
    <name evidence="1" type="primary">gltX</name>
    <name type="ordered locus">SAG0113</name>
</gene>
<keyword id="KW-0030">Aminoacyl-tRNA synthetase</keyword>
<keyword id="KW-0067">ATP-binding</keyword>
<keyword id="KW-0963">Cytoplasm</keyword>
<keyword id="KW-0436">Ligase</keyword>
<keyword id="KW-0547">Nucleotide-binding</keyword>
<keyword id="KW-0648">Protein biosynthesis</keyword>
<keyword id="KW-1185">Reference proteome</keyword>
<proteinExistence type="inferred from homology"/>